<proteinExistence type="evidence at protein level"/>
<dbReference type="EC" id="1.2.1.27" evidence="4 5"/>
<dbReference type="EMBL" id="AB005554">
    <property type="protein sequence ID" value="BAA21609.1"/>
    <property type="molecule type" value="Genomic_DNA"/>
</dbReference>
<dbReference type="EMBL" id="AL009126">
    <property type="protein sequence ID" value="CAB16012.1"/>
    <property type="molecule type" value="Genomic_DNA"/>
</dbReference>
<dbReference type="EMBL" id="D14399">
    <property type="protein sequence ID" value="BAA03290.1"/>
    <property type="molecule type" value="Genomic_DNA"/>
</dbReference>
<dbReference type="PIR" id="A69645">
    <property type="entry name" value="A69645"/>
</dbReference>
<dbReference type="RefSeq" id="NP_391855.1">
    <property type="nucleotide sequence ID" value="NC_000964.3"/>
</dbReference>
<dbReference type="RefSeq" id="WP_003243682.1">
    <property type="nucleotide sequence ID" value="NZ_OZ025638.1"/>
</dbReference>
<dbReference type="PDB" id="1T90">
    <property type="method" value="X-ray"/>
    <property type="resolution" value="2.50 A"/>
    <property type="chains" value="A/B/C/D=2-487"/>
</dbReference>
<dbReference type="PDBsum" id="1T90"/>
<dbReference type="SMR" id="P42412"/>
<dbReference type="FunCoup" id="P42412">
    <property type="interactions" value="487"/>
</dbReference>
<dbReference type="STRING" id="224308.BSU39760"/>
<dbReference type="jPOST" id="P42412"/>
<dbReference type="PaxDb" id="224308-BSU39760"/>
<dbReference type="EnsemblBacteria" id="CAB16012">
    <property type="protein sequence ID" value="CAB16012"/>
    <property type="gene ID" value="BSU_39760"/>
</dbReference>
<dbReference type="GeneID" id="937575"/>
<dbReference type="KEGG" id="bsu:BSU39760"/>
<dbReference type="PATRIC" id="fig|224308.179.peg.4301"/>
<dbReference type="eggNOG" id="COG1012">
    <property type="taxonomic scope" value="Bacteria"/>
</dbReference>
<dbReference type="InParanoid" id="P42412"/>
<dbReference type="OrthoDB" id="9762913at2"/>
<dbReference type="PhylomeDB" id="P42412"/>
<dbReference type="BioCyc" id="BSUB:BSU39760-MONOMER"/>
<dbReference type="BioCyc" id="MetaCyc:BSU39760-MONOMER"/>
<dbReference type="BRENDA" id="1.2.1.27">
    <property type="organism ID" value="658"/>
</dbReference>
<dbReference type="SABIO-RK" id="P42412"/>
<dbReference type="UniPathway" id="UPA00076">
    <property type="reaction ID" value="UER00148"/>
</dbReference>
<dbReference type="EvolutionaryTrace" id="P42412"/>
<dbReference type="Proteomes" id="UP000001570">
    <property type="component" value="Chromosome"/>
</dbReference>
<dbReference type="GO" id="GO:0018478">
    <property type="term" value="F:malonate-semialdehyde dehydrogenase (acetylating) activity"/>
    <property type="evidence" value="ECO:0007669"/>
    <property type="project" value="UniProtKB-UniRule"/>
</dbReference>
<dbReference type="GO" id="GO:0004491">
    <property type="term" value="F:methylmalonate-semialdehyde dehydrogenase (acylating, NAD) activity"/>
    <property type="evidence" value="ECO:0000318"/>
    <property type="project" value="GO_Central"/>
</dbReference>
<dbReference type="GO" id="GO:0019310">
    <property type="term" value="P:inositol catabolic process"/>
    <property type="evidence" value="ECO:0007669"/>
    <property type="project" value="UniProtKB-UniRule"/>
</dbReference>
<dbReference type="GO" id="GO:0006210">
    <property type="term" value="P:thymine catabolic process"/>
    <property type="evidence" value="ECO:0000318"/>
    <property type="project" value="GO_Central"/>
</dbReference>
<dbReference type="GO" id="GO:0006574">
    <property type="term" value="P:valine catabolic process"/>
    <property type="evidence" value="ECO:0000318"/>
    <property type="project" value="GO_Central"/>
</dbReference>
<dbReference type="CDD" id="cd07085">
    <property type="entry name" value="ALDH_F6_MMSDH"/>
    <property type="match status" value="1"/>
</dbReference>
<dbReference type="FunFam" id="3.40.309.10:FF:000002">
    <property type="entry name" value="Methylmalonate-semialdehyde dehydrogenase (Acylating)"/>
    <property type="match status" value="1"/>
</dbReference>
<dbReference type="FunFam" id="3.40.605.10:FF:000003">
    <property type="entry name" value="Methylmalonate-semialdehyde dehydrogenase [acylating]"/>
    <property type="match status" value="1"/>
</dbReference>
<dbReference type="Gene3D" id="3.40.605.10">
    <property type="entry name" value="Aldehyde Dehydrogenase, Chain A, domain 1"/>
    <property type="match status" value="1"/>
</dbReference>
<dbReference type="Gene3D" id="3.40.309.10">
    <property type="entry name" value="Aldehyde Dehydrogenase, Chain A, domain 2"/>
    <property type="match status" value="1"/>
</dbReference>
<dbReference type="HAMAP" id="MF_01670">
    <property type="entry name" value="IolA"/>
    <property type="match status" value="1"/>
</dbReference>
<dbReference type="InterPro" id="IPR016161">
    <property type="entry name" value="Ald_DH/histidinol_DH"/>
</dbReference>
<dbReference type="InterPro" id="IPR016163">
    <property type="entry name" value="Ald_DH_C"/>
</dbReference>
<dbReference type="InterPro" id="IPR016160">
    <property type="entry name" value="Ald_DH_CS_CYS"/>
</dbReference>
<dbReference type="InterPro" id="IPR016162">
    <property type="entry name" value="Ald_DH_N"/>
</dbReference>
<dbReference type="InterPro" id="IPR015590">
    <property type="entry name" value="Aldehyde_DH_dom"/>
</dbReference>
<dbReference type="InterPro" id="IPR010061">
    <property type="entry name" value="MeMal-semiAld_DH"/>
</dbReference>
<dbReference type="InterPro" id="IPR023510">
    <property type="entry name" value="MSDH_GmP_bac"/>
</dbReference>
<dbReference type="NCBIfam" id="TIGR01722">
    <property type="entry name" value="MMSDH"/>
    <property type="match status" value="1"/>
</dbReference>
<dbReference type="PANTHER" id="PTHR43866">
    <property type="entry name" value="MALONATE-SEMIALDEHYDE DEHYDROGENASE"/>
    <property type="match status" value="1"/>
</dbReference>
<dbReference type="PANTHER" id="PTHR43866:SF4">
    <property type="entry name" value="MALONATE-SEMIALDEHYDE DEHYDROGENASE"/>
    <property type="match status" value="1"/>
</dbReference>
<dbReference type="Pfam" id="PF00171">
    <property type="entry name" value="Aldedh"/>
    <property type="match status" value="1"/>
</dbReference>
<dbReference type="SUPFAM" id="SSF53720">
    <property type="entry name" value="ALDH-like"/>
    <property type="match status" value="1"/>
</dbReference>
<dbReference type="PROSITE" id="PS00070">
    <property type="entry name" value="ALDEHYDE_DEHYDR_CYS"/>
    <property type="match status" value="1"/>
</dbReference>
<accession>P42412</accession>
<protein>
    <recommendedName>
        <fullName evidence="2 10">Malonate-semialdehyde dehydrogenase</fullName>
        <shortName evidence="2 9">MSA dehydrogenase</shortName>
        <ecNumber evidence="4 5">1.2.1.27</ecNumber>
    </recommendedName>
    <alternativeName>
        <fullName evidence="2 8">Methylmalonate-semialdehyde dehydrogenase</fullName>
        <shortName evidence="2 8">MMSA dehydrogenase</shortName>
        <shortName>MMSDH</shortName>
        <shortName evidence="2 8">MSDH</shortName>
    </alternativeName>
</protein>
<feature type="chain" id="PRO_0000056583" description="Malonate-semialdehyde dehydrogenase">
    <location>
        <begin position="1"/>
        <end position="487"/>
    </location>
</feature>
<feature type="active site" description="Nucleophile" evidence="1 2">
    <location>
        <position position="284"/>
    </location>
</feature>
<feature type="binding site" evidence="3 13">
    <location>
        <position position="150"/>
    </location>
    <ligand>
        <name>NAD(+)</name>
        <dbReference type="ChEBI" id="CHEBI:57540"/>
    </ligand>
</feature>
<feature type="binding site" evidence="3 13">
    <location>
        <position position="152"/>
    </location>
    <ligand>
        <name>NAD(+)</name>
        <dbReference type="ChEBI" id="CHEBI:57540"/>
    </ligand>
</feature>
<feature type="binding site" evidence="3 13">
    <location>
        <position position="176"/>
    </location>
    <ligand>
        <name>NAD(+)</name>
        <dbReference type="ChEBI" id="CHEBI:57540"/>
    </ligand>
</feature>
<feature type="binding site" evidence="3 13">
    <location>
        <position position="179"/>
    </location>
    <ligand>
        <name>NAD(+)</name>
        <dbReference type="ChEBI" id="CHEBI:57540"/>
    </ligand>
</feature>
<feature type="binding site" evidence="3 13">
    <location>
        <position position="180"/>
    </location>
    <ligand>
        <name>NAD(+)</name>
        <dbReference type="ChEBI" id="CHEBI:57540"/>
    </ligand>
</feature>
<feature type="binding site" evidence="3 13">
    <location>
        <position position="229"/>
    </location>
    <ligand>
        <name>NAD(+)</name>
        <dbReference type="ChEBI" id="CHEBI:57540"/>
    </ligand>
</feature>
<feature type="binding site" evidence="3 13">
    <location>
        <position position="251"/>
    </location>
    <ligand>
        <name>NAD(+)</name>
        <dbReference type="ChEBI" id="CHEBI:57540"/>
    </ligand>
</feature>
<feature type="binding site" evidence="3 13">
    <location>
        <position position="382"/>
    </location>
    <ligand>
        <name>NAD(+)</name>
        <dbReference type="ChEBI" id="CHEBI:57540"/>
    </ligand>
</feature>
<feature type="mutagenesis site" description="No effect at either the structural or enzymatic levels; when associated with A-160; A-287; A-351 and A-413." evidence="4">
    <original>C</original>
    <variation>A</variation>
    <location>
        <position position="36"/>
    </location>
</feature>
<feature type="mutagenesis site" description="At least 50-fold decrease of the second-order rate constant for the acylation step." evidence="6">
    <original>R</original>
    <variation>L</variation>
    <location>
        <position position="107"/>
    </location>
</feature>
<feature type="mutagenesis site" description="No effect at either the structural or enzymatic levels; when associated with A-36; A-287; A-351 and A-413." evidence="4">
    <original>C</original>
    <variation>A</variation>
    <location>
        <position position="160"/>
    </location>
</feature>
<feature type="mutagenesis site" description="At least 50-fold decrease of the second-order rate constant for the acylation step." evidence="6">
    <original>R</original>
    <variation>L</variation>
    <location>
        <position position="283"/>
    </location>
</feature>
<feature type="mutagenesis site" description="No effect at either the structural or enzymatic levels; when associated with A-36; A-160; A-351 and A-413." evidence="4">
    <original>C</original>
    <variation>A</variation>
    <location>
        <position position="287"/>
    </location>
</feature>
<feature type="mutagenesis site" description="No effect at either the structural or enzymatic levels; when associated with A-36; A-160; A-287 and A-413." evidence="4">
    <original>C</original>
    <variation>A</variation>
    <location>
        <position position="351"/>
    </location>
</feature>
<feature type="mutagenesis site" description="No effect at either the structural or enzymatic levels; when associated with A-36; A-160; A-287 and A-351." evidence="4">
    <original>C</original>
    <variation>A</variation>
    <location>
        <position position="413"/>
    </location>
</feature>
<feature type="strand" evidence="14">
    <location>
        <begin position="9"/>
        <end position="11"/>
    </location>
</feature>
<feature type="strand" evidence="14">
    <location>
        <begin position="14"/>
        <end position="16"/>
    </location>
</feature>
<feature type="strand" evidence="14">
    <location>
        <begin position="23"/>
        <end position="27"/>
    </location>
</feature>
<feature type="turn" evidence="14">
    <location>
        <begin position="29"/>
        <end position="31"/>
    </location>
</feature>
<feature type="strand" evidence="14">
    <location>
        <begin position="34"/>
        <end position="39"/>
    </location>
</feature>
<feature type="helix" evidence="14">
    <location>
        <begin position="43"/>
        <end position="60"/>
    </location>
</feature>
<feature type="helix" evidence="14">
    <location>
        <begin position="65"/>
        <end position="80"/>
    </location>
</feature>
<feature type="helix" evidence="14">
    <location>
        <begin position="83"/>
        <end position="94"/>
    </location>
</feature>
<feature type="helix" evidence="14">
    <location>
        <begin position="98"/>
        <end position="115"/>
    </location>
</feature>
<feature type="helix" evidence="14">
    <location>
        <begin position="118"/>
        <end position="122"/>
    </location>
</feature>
<feature type="strand" evidence="14">
    <location>
        <begin position="124"/>
        <end position="131"/>
    </location>
</feature>
<feature type="strand" evidence="14">
    <location>
        <begin position="134"/>
        <end position="142"/>
    </location>
</feature>
<feature type="strand" evidence="14">
    <location>
        <begin position="144"/>
        <end position="149"/>
    </location>
</feature>
<feature type="helix" evidence="14">
    <location>
        <begin position="157"/>
        <end position="168"/>
    </location>
</feature>
<feature type="strand" evidence="14">
    <location>
        <begin position="172"/>
        <end position="176"/>
    </location>
</feature>
<feature type="strand" evidence="14">
    <location>
        <begin position="179"/>
        <end position="181"/>
    </location>
</feature>
<feature type="helix" evidence="14">
    <location>
        <begin position="183"/>
        <end position="194"/>
    </location>
</feature>
<feature type="strand" evidence="14">
    <location>
        <begin position="201"/>
        <end position="204"/>
    </location>
</feature>
<feature type="helix" evidence="14">
    <location>
        <begin position="209"/>
        <end position="217"/>
    </location>
</feature>
<feature type="strand" evidence="14">
    <location>
        <begin position="221"/>
        <end position="228"/>
    </location>
</feature>
<feature type="helix" evidence="14">
    <location>
        <begin position="230"/>
        <end position="242"/>
    </location>
</feature>
<feature type="strand" evidence="14">
    <location>
        <begin position="246"/>
        <end position="250"/>
    </location>
</feature>
<feature type="strand" evidence="14">
    <location>
        <begin position="255"/>
        <end position="259"/>
    </location>
</feature>
<feature type="helix" evidence="14">
    <location>
        <begin position="265"/>
        <end position="277"/>
    </location>
</feature>
<feature type="helix" evidence="14">
    <location>
        <begin position="278"/>
        <end position="281"/>
    </location>
</feature>
<feature type="strand" evidence="14">
    <location>
        <begin position="287"/>
        <end position="293"/>
    </location>
</feature>
<feature type="helix" evidence="14">
    <location>
        <begin position="294"/>
        <end position="308"/>
    </location>
</feature>
<feature type="helix" evidence="14">
    <location>
        <begin position="329"/>
        <end position="344"/>
    </location>
</feature>
<feature type="strand" evidence="14">
    <location>
        <begin position="348"/>
        <end position="351"/>
    </location>
</feature>
<feature type="strand" evidence="14">
    <location>
        <begin position="353"/>
        <end position="356"/>
    </location>
</feature>
<feature type="strand" evidence="14">
    <location>
        <begin position="359"/>
        <end position="362"/>
    </location>
</feature>
<feature type="strand" evidence="14">
    <location>
        <begin position="367"/>
        <end position="371"/>
    </location>
</feature>
<feature type="helix" evidence="14">
    <location>
        <begin position="377"/>
        <end position="380"/>
    </location>
</feature>
<feature type="strand" evidence="14">
    <location>
        <begin position="385"/>
        <end position="395"/>
    </location>
</feature>
<feature type="helix" evidence="14">
    <location>
        <begin position="396"/>
        <end position="405"/>
    </location>
</feature>
<feature type="strand" evidence="14">
    <location>
        <begin position="406"/>
        <end position="415"/>
    </location>
</feature>
<feature type="helix" evidence="14">
    <location>
        <begin position="419"/>
        <end position="428"/>
    </location>
</feature>
<feature type="strand" evidence="14">
    <location>
        <begin position="432"/>
        <end position="437"/>
    </location>
</feature>
<feature type="strand" evidence="14">
    <location>
        <begin position="456"/>
        <end position="460"/>
    </location>
</feature>
<feature type="helix" evidence="14">
    <location>
        <begin position="464"/>
        <end position="470"/>
    </location>
</feature>
<feature type="strand" evidence="14">
    <location>
        <begin position="472"/>
        <end position="480"/>
    </location>
</feature>
<gene>
    <name evidence="2" type="primary">iolA</name>
    <name type="synonym">mmsA</name>
    <name type="synonym">yxdA</name>
    <name type="ordered locus">BSU39760</name>
    <name type="ORF">E83A</name>
</gene>
<organism>
    <name type="scientific">Bacillus subtilis (strain 168)</name>
    <dbReference type="NCBI Taxonomy" id="224308"/>
    <lineage>
        <taxon>Bacteria</taxon>
        <taxon>Bacillati</taxon>
        <taxon>Bacillota</taxon>
        <taxon>Bacilli</taxon>
        <taxon>Bacillales</taxon>
        <taxon>Bacillaceae</taxon>
        <taxon>Bacillus</taxon>
    </lineage>
</organism>
<comment type="function">
    <text evidence="2 4 5 6">Catalyzes the oxidation of malonate semialdehyde (MSA) and methylmalonate semialdehyde (MMSA) into acetyl-CoA and propanoyl-CoA, respectively (PubMed:16332250, PubMed:18310071, PubMed:21515690). Is involved in a myo-inositol catabolic pathway (PubMed:18310071). Bicarbonate, and not CO2, is the end-product of the enzymatic reaction (PubMed:16332250).</text>
</comment>
<comment type="catalytic activity">
    <reaction evidence="2 4 5">
        <text>3-oxopropanoate + NAD(+) + CoA + H2O = hydrogencarbonate + acetyl-CoA + NADH + H(+)</text>
        <dbReference type="Rhea" id="RHEA:76615"/>
        <dbReference type="ChEBI" id="CHEBI:15377"/>
        <dbReference type="ChEBI" id="CHEBI:15378"/>
        <dbReference type="ChEBI" id="CHEBI:17544"/>
        <dbReference type="ChEBI" id="CHEBI:33190"/>
        <dbReference type="ChEBI" id="CHEBI:57287"/>
        <dbReference type="ChEBI" id="CHEBI:57288"/>
        <dbReference type="ChEBI" id="CHEBI:57540"/>
        <dbReference type="ChEBI" id="CHEBI:57945"/>
        <dbReference type="EC" id="1.2.1.27"/>
    </reaction>
    <physiologicalReaction direction="left-to-right" evidence="11 12">
        <dbReference type="Rhea" id="RHEA:76616"/>
    </physiologicalReaction>
</comment>
<comment type="catalytic activity">
    <reaction evidence="2 4 6">
        <text>2-methyl-3-oxopropanoate + NAD(+) + CoA + H2O = propanoyl-CoA + hydrogencarbonate + NADH + H(+)</text>
        <dbReference type="Rhea" id="RHEA:20804"/>
        <dbReference type="ChEBI" id="CHEBI:15377"/>
        <dbReference type="ChEBI" id="CHEBI:15378"/>
        <dbReference type="ChEBI" id="CHEBI:17544"/>
        <dbReference type="ChEBI" id="CHEBI:57287"/>
        <dbReference type="ChEBI" id="CHEBI:57392"/>
        <dbReference type="ChEBI" id="CHEBI:57540"/>
        <dbReference type="ChEBI" id="CHEBI:57700"/>
        <dbReference type="ChEBI" id="CHEBI:57945"/>
        <dbReference type="EC" id="1.2.1.27"/>
    </reaction>
    <physiologicalReaction direction="left-to-right" evidence="11 12">
        <dbReference type="Rhea" id="RHEA:20805"/>
    </physiologicalReaction>
</comment>
<comment type="biophysicochemical properties">
    <kinetics>
        <KM evidence="4">0.12 mM for malonate semialdehyde (at 30 degrees Celsius and pH 8.2)</KM>
        <KM evidence="4">0.06 mM for methylmalonate semialdehyde (at 30 degrees Celsius and pH 8.2)</KM>
        <KM evidence="4">0.03 mM for CoA (with malonate semialdehyde at 30 degrees Celsius and pH 8.2)</KM>
        <KM evidence="4">0.12 mM for CoA (with methylmalonate semialdehyde at 30 degrees Celsius and pH 8.2)</KM>
        <KM evidence="4">1.78 mM for NAD (with malonate semialdehyde at 30 degrees Celsius and pH 8.2)</KM>
        <KM evidence="4">2.3 mM for NAD (with methylmalonate semialdehyde at 30 degrees Celsius and pH 8.2)</KM>
        <text evidence="4">kcat is 7.4 sec(-1) with malonate semialdehyde as substrate. kcat is 1.1 sec(-1) with methylmalonate semialdehyde as substrate.</text>
    </kinetics>
</comment>
<comment type="pathway">
    <text evidence="2 5">Polyol metabolism; myo-inositol degradation into acetyl-CoA; acetyl-CoA from myo-inositol: step 7/7.</text>
</comment>
<comment type="subunit">
    <text evidence="2 3">Homotetramer.</text>
</comment>
<comment type="disruption phenotype">
    <text evidence="7">No effect on vanillin degradation.</text>
</comment>
<comment type="similarity">
    <text evidence="2 10">Belongs to the aldehyde dehydrogenase family. IolA subfamily.</text>
</comment>
<keyword id="KW-0002">3D-structure</keyword>
<keyword id="KW-0520">NAD</keyword>
<keyword id="KW-0560">Oxidoreductase</keyword>
<keyword id="KW-1185">Reference proteome</keyword>
<reference key="1">
    <citation type="journal article" date="1995" name="DNA Res.">
        <title>Cloning and sequencing of a 36-kb region of the Bacillus subtilis genome between the gnt and iol operons.</title>
        <authorList>
            <person name="Yoshida K."/>
            <person name="Seki S."/>
            <person name="Fujimura M."/>
            <person name="Miwa Y."/>
            <person name="Fujita Y."/>
        </authorList>
    </citation>
    <scope>NUCLEOTIDE SEQUENCE [GENOMIC DNA]</scope>
    <source>
        <strain>168 / BGSC1A1</strain>
    </source>
</reference>
<reference key="2">
    <citation type="journal article" date="1997" name="Nature">
        <title>The complete genome sequence of the Gram-positive bacterium Bacillus subtilis.</title>
        <authorList>
            <person name="Kunst F."/>
            <person name="Ogasawara N."/>
            <person name="Moszer I."/>
            <person name="Albertini A.M."/>
            <person name="Alloni G."/>
            <person name="Azevedo V."/>
            <person name="Bertero M.G."/>
            <person name="Bessieres P."/>
            <person name="Bolotin A."/>
            <person name="Borchert S."/>
            <person name="Borriss R."/>
            <person name="Boursier L."/>
            <person name="Brans A."/>
            <person name="Braun M."/>
            <person name="Brignell S.C."/>
            <person name="Bron S."/>
            <person name="Brouillet S."/>
            <person name="Bruschi C.V."/>
            <person name="Caldwell B."/>
            <person name="Capuano V."/>
            <person name="Carter N.M."/>
            <person name="Choi S.-K."/>
            <person name="Codani J.-J."/>
            <person name="Connerton I.F."/>
            <person name="Cummings N.J."/>
            <person name="Daniel R.A."/>
            <person name="Denizot F."/>
            <person name="Devine K.M."/>
            <person name="Duesterhoeft A."/>
            <person name="Ehrlich S.D."/>
            <person name="Emmerson P.T."/>
            <person name="Entian K.-D."/>
            <person name="Errington J."/>
            <person name="Fabret C."/>
            <person name="Ferrari E."/>
            <person name="Foulger D."/>
            <person name="Fritz C."/>
            <person name="Fujita M."/>
            <person name="Fujita Y."/>
            <person name="Fuma S."/>
            <person name="Galizzi A."/>
            <person name="Galleron N."/>
            <person name="Ghim S.-Y."/>
            <person name="Glaser P."/>
            <person name="Goffeau A."/>
            <person name="Golightly E.J."/>
            <person name="Grandi G."/>
            <person name="Guiseppi G."/>
            <person name="Guy B.J."/>
            <person name="Haga K."/>
            <person name="Haiech J."/>
            <person name="Harwood C.R."/>
            <person name="Henaut A."/>
            <person name="Hilbert H."/>
            <person name="Holsappel S."/>
            <person name="Hosono S."/>
            <person name="Hullo M.-F."/>
            <person name="Itaya M."/>
            <person name="Jones L.-M."/>
            <person name="Joris B."/>
            <person name="Karamata D."/>
            <person name="Kasahara Y."/>
            <person name="Klaerr-Blanchard M."/>
            <person name="Klein C."/>
            <person name="Kobayashi Y."/>
            <person name="Koetter P."/>
            <person name="Koningstein G."/>
            <person name="Krogh S."/>
            <person name="Kumano M."/>
            <person name="Kurita K."/>
            <person name="Lapidus A."/>
            <person name="Lardinois S."/>
            <person name="Lauber J."/>
            <person name="Lazarevic V."/>
            <person name="Lee S.-M."/>
            <person name="Levine A."/>
            <person name="Liu H."/>
            <person name="Masuda S."/>
            <person name="Mauel C."/>
            <person name="Medigue C."/>
            <person name="Medina N."/>
            <person name="Mellado R.P."/>
            <person name="Mizuno M."/>
            <person name="Moestl D."/>
            <person name="Nakai S."/>
            <person name="Noback M."/>
            <person name="Noone D."/>
            <person name="O'Reilly M."/>
            <person name="Ogawa K."/>
            <person name="Ogiwara A."/>
            <person name="Oudega B."/>
            <person name="Park S.-H."/>
            <person name="Parro V."/>
            <person name="Pohl T.M."/>
            <person name="Portetelle D."/>
            <person name="Porwollik S."/>
            <person name="Prescott A.M."/>
            <person name="Presecan E."/>
            <person name="Pujic P."/>
            <person name="Purnelle B."/>
            <person name="Rapoport G."/>
            <person name="Rey M."/>
            <person name="Reynolds S."/>
            <person name="Rieger M."/>
            <person name="Rivolta C."/>
            <person name="Rocha E."/>
            <person name="Roche B."/>
            <person name="Rose M."/>
            <person name="Sadaie Y."/>
            <person name="Sato T."/>
            <person name="Scanlan E."/>
            <person name="Schleich S."/>
            <person name="Schroeter R."/>
            <person name="Scoffone F."/>
            <person name="Sekiguchi J."/>
            <person name="Sekowska A."/>
            <person name="Seror S.J."/>
            <person name="Serror P."/>
            <person name="Shin B.-S."/>
            <person name="Soldo B."/>
            <person name="Sorokin A."/>
            <person name="Tacconi E."/>
            <person name="Takagi T."/>
            <person name="Takahashi H."/>
            <person name="Takemaru K."/>
            <person name="Takeuchi M."/>
            <person name="Tamakoshi A."/>
            <person name="Tanaka T."/>
            <person name="Terpstra P."/>
            <person name="Tognoni A."/>
            <person name="Tosato V."/>
            <person name="Uchiyama S."/>
            <person name="Vandenbol M."/>
            <person name="Vannier F."/>
            <person name="Vassarotti A."/>
            <person name="Viari A."/>
            <person name="Wambutt R."/>
            <person name="Wedler E."/>
            <person name="Wedler H."/>
            <person name="Weitzenegger T."/>
            <person name="Winters P."/>
            <person name="Wipat A."/>
            <person name="Yamamoto H."/>
            <person name="Yamane K."/>
            <person name="Yasumoto K."/>
            <person name="Yata K."/>
            <person name="Yoshida K."/>
            <person name="Yoshikawa H.-F."/>
            <person name="Zumstein E."/>
            <person name="Yoshikawa H."/>
            <person name="Danchin A."/>
        </authorList>
    </citation>
    <scope>NUCLEOTIDE SEQUENCE [LARGE SCALE GENOMIC DNA]</scope>
    <source>
        <strain>168</strain>
    </source>
</reference>
<reference key="3">
    <citation type="journal article" date="1994" name="Microbiology">
        <title>Cloning and nucleotide sequencing of a 15 kb region of the Bacillus subtilis genome containing the iol operon.</title>
        <authorList>
            <person name="Yoshida K."/>
            <person name="Sano H."/>
            <person name="Miwa Y."/>
            <person name="Ogasawara N."/>
            <person name="Fujita Y."/>
        </authorList>
    </citation>
    <scope>NUCLEOTIDE SEQUENCE [GENOMIC DNA] OF 71-487</scope>
    <source>
        <strain>168 / BGSC1A1</strain>
    </source>
</reference>
<reference key="4">
    <citation type="journal article" date="2006" name="Biochem. J.">
        <title>Mechanistic characterization of the MSDH (methylmalonate semialdehyde dehydrogenase) from Bacillus subtilis.</title>
        <authorList>
            <person name="Stines-Chaumeil C."/>
            <person name="Talfournier F."/>
            <person name="Branlant G."/>
        </authorList>
    </citation>
    <scope>FUNCTION</scope>
    <scope>CATALYTIC ACTIVITY</scope>
    <scope>REACTION MECHANISM</scope>
    <scope>MUTAGENESIS OF CYS-36; CYS-160; CYS-287; CYS-351 AND CYS-413</scope>
    <scope>BIOPHYSICOCHEMICAL PROPERTIES</scope>
</reference>
<reference key="5">
    <citation type="journal article" date="2008" name="J. Biol. Chem.">
        <title>Myo-inositol catabolism in Bacillus subtilis.</title>
        <authorList>
            <person name="Yoshida K."/>
            <person name="Yamaguchi M."/>
            <person name="Morinaga T."/>
            <person name="Kinehara M."/>
            <person name="Ikeuchi M."/>
            <person name="Ashida H."/>
            <person name="Fujita Y."/>
        </authorList>
    </citation>
    <scope>FUNCTION</scope>
    <scope>CATALYTIC ACTIVITY</scope>
    <scope>PATHWAY</scope>
    <source>
        <strain>168 / 60015</strain>
    </source>
</reference>
<reference key="6">
    <citation type="journal article" date="2011" name="J. Biol. Chem.">
        <title>Methylmalonate-semialdehyde dehydrogenase from Bacillus subtilis: substrate specificity and coenzyme A binding.</title>
        <authorList>
            <person name="Talfournier F."/>
            <person name="Stines-Chaumeil C."/>
            <person name="Branlant G."/>
        </authorList>
    </citation>
    <scope>FUNCTION</scope>
    <scope>CATALYTIC ACTIVITY</scope>
    <scope>REACTION MECHANISM</scope>
    <scope>MUTAGENESIS OF ARG-107 AND ARG-283</scope>
</reference>
<reference key="7">
    <citation type="journal article" date="2016" name="Appl. Microbiol. Biotechnol.">
        <title>Identification and characterization of the vanillin dehydrogenase YfmT in Bacillus subtilis 3NA.</title>
        <authorList>
            <person name="Graf N."/>
            <person name="Wenzel M."/>
            <person name="Altenbuchner J."/>
        </authorList>
    </citation>
    <scope>DISRUPTION PHENOTYPE</scope>
    <source>
        <strain>168 / 3NA</strain>
    </source>
</reference>
<reference evidence="13" key="8">
    <citation type="journal article" date="2004" name="Acta Crystallogr. D">
        <title>Expression, purification, crystallization and preliminary X-ray diffraction data of methylmalonate-semialdehyde dehydrogenase from Bacillus subtilis.</title>
        <authorList>
            <person name="Dubourg H."/>
            <person name="Stines-Chaumeil C."/>
            <person name="Didierjean C."/>
            <person name="Talfournier F."/>
            <person name="Rahuel-Clermont S."/>
            <person name="Branlant G."/>
            <person name="Aubry A."/>
        </authorList>
    </citation>
    <scope>X-RAY CRYSTALLOGRAPHY (2.5 ANGSTROMS) OF 2-487 IN COMPLEX WITH NAD</scope>
    <scope>SUBUNIT</scope>
    <source>
        <strain>168</strain>
    </source>
</reference>
<sequence length="487" mass="53453">MAEIRKLKNYINGEWVESKTDQYEDVVNPATKEVLCQVPISTKEDIDYAAQTAAEAFKTWSKVAVPRRARILFNFQQLLSQHKEELAHLITIENGKNTKEALGEVGRGIENVEFAAGAPSLMMGDSLASIATDVEAANYRYPIGVVGGIAPFNFPMMVPCWMFPMAIALGNTFILKPSERTPLLTEKLVELFEKAGLPKGVFNVVYGAHDVVNGILEHPEIKAISFVGSKPVGEYVYKKGSENLKRVQSLTGAKNHTIVLNDANLEDTVTNIVGAAFGSAGERCMACAVVTVEEGIADEFMAKLQEKVADIKIGNGLDDGVFLGPVIREDNKKRTLSYIEKGLEEGARLVCDGRENVSDDGYFVGPTIFDNVTTEMTIWKDEIFAPVLSVIRVKNLKEAIEIANKSEFANGACLFTSNSNAIRYFRENIDAGMLGINLGVPAPMAFFPFSGWKSSFFGTLHANGKDSVDFYTRKKVVTARYPAPDFN</sequence>
<evidence type="ECO:0000250" key="1">
    <source>
        <dbReference type="UniProtKB" id="P25526"/>
    </source>
</evidence>
<evidence type="ECO:0000255" key="2">
    <source>
        <dbReference type="HAMAP-Rule" id="MF_01670"/>
    </source>
</evidence>
<evidence type="ECO:0000269" key="3">
    <source>
    </source>
</evidence>
<evidence type="ECO:0000269" key="4">
    <source>
    </source>
</evidence>
<evidence type="ECO:0000269" key="5">
    <source>
    </source>
</evidence>
<evidence type="ECO:0000269" key="6">
    <source>
    </source>
</evidence>
<evidence type="ECO:0000269" key="7">
    <source>
    </source>
</evidence>
<evidence type="ECO:0000303" key="8">
    <source>
    </source>
</evidence>
<evidence type="ECO:0000303" key="9">
    <source>
    </source>
</evidence>
<evidence type="ECO:0000305" key="10"/>
<evidence type="ECO:0000305" key="11">
    <source>
    </source>
</evidence>
<evidence type="ECO:0000305" key="12">
    <source>
    </source>
</evidence>
<evidence type="ECO:0007744" key="13">
    <source>
        <dbReference type="PDB" id="1T90"/>
    </source>
</evidence>
<evidence type="ECO:0007829" key="14">
    <source>
        <dbReference type="PDB" id="1T90"/>
    </source>
</evidence>
<name>IOLA_BACSU</name>